<name>ACCD_BREBN</name>
<dbReference type="EC" id="2.1.3.15" evidence="1"/>
<dbReference type="EMBL" id="AP008955">
    <property type="protein sequence ID" value="BAH42358.1"/>
    <property type="molecule type" value="Genomic_DNA"/>
</dbReference>
<dbReference type="RefSeq" id="WP_012685107.1">
    <property type="nucleotide sequence ID" value="NC_012491.1"/>
</dbReference>
<dbReference type="SMR" id="C0Z7W5"/>
<dbReference type="STRING" id="358681.BBR47_13810"/>
<dbReference type="KEGG" id="bbe:BBR47_13810"/>
<dbReference type="eggNOG" id="COG0777">
    <property type="taxonomic scope" value="Bacteria"/>
</dbReference>
<dbReference type="HOGENOM" id="CLU_015486_1_1_9"/>
<dbReference type="UniPathway" id="UPA00655">
    <property type="reaction ID" value="UER00711"/>
</dbReference>
<dbReference type="Proteomes" id="UP000001877">
    <property type="component" value="Chromosome"/>
</dbReference>
<dbReference type="GO" id="GO:0009317">
    <property type="term" value="C:acetyl-CoA carboxylase complex"/>
    <property type="evidence" value="ECO:0007669"/>
    <property type="project" value="InterPro"/>
</dbReference>
<dbReference type="GO" id="GO:0003989">
    <property type="term" value="F:acetyl-CoA carboxylase activity"/>
    <property type="evidence" value="ECO:0007669"/>
    <property type="project" value="InterPro"/>
</dbReference>
<dbReference type="GO" id="GO:0005524">
    <property type="term" value="F:ATP binding"/>
    <property type="evidence" value="ECO:0007669"/>
    <property type="project" value="UniProtKB-KW"/>
</dbReference>
<dbReference type="GO" id="GO:0016743">
    <property type="term" value="F:carboxyl- or carbamoyltransferase activity"/>
    <property type="evidence" value="ECO:0007669"/>
    <property type="project" value="UniProtKB-UniRule"/>
</dbReference>
<dbReference type="GO" id="GO:0008270">
    <property type="term" value="F:zinc ion binding"/>
    <property type="evidence" value="ECO:0007669"/>
    <property type="project" value="UniProtKB-UniRule"/>
</dbReference>
<dbReference type="GO" id="GO:0006633">
    <property type="term" value="P:fatty acid biosynthetic process"/>
    <property type="evidence" value="ECO:0007669"/>
    <property type="project" value="UniProtKB-KW"/>
</dbReference>
<dbReference type="GO" id="GO:2001295">
    <property type="term" value="P:malonyl-CoA biosynthetic process"/>
    <property type="evidence" value="ECO:0007669"/>
    <property type="project" value="UniProtKB-UniRule"/>
</dbReference>
<dbReference type="Gene3D" id="3.90.226.10">
    <property type="entry name" value="2-enoyl-CoA Hydratase, Chain A, domain 1"/>
    <property type="match status" value="1"/>
</dbReference>
<dbReference type="HAMAP" id="MF_01395">
    <property type="entry name" value="AcetylCoA_CT_beta"/>
    <property type="match status" value="1"/>
</dbReference>
<dbReference type="InterPro" id="IPR034733">
    <property type="entry name" value="AcCoA_carboxyl_beta"/>
</dbReference>
<dbReference type="InterPro" id="IPR000438">
    <property type="entry name" value="Acetyl_CoA_COase_Trfase_b_su"/>
</dbReference>
<dbReference type="InterPro" id="IPR029045">
    <property type="entry name" value="ClpP/crotonase-like_dom_sf"/>
</dbReference>
<dbReference type="InterPro" id="IPR011762">
    <property type="entry name" value="COA_CT_N"/>
</dbReference>
<dbReference type="InterPro" id="IPR041010">
    <property type="entry name" value="Znf-ACC"/>
</dbReference>
<dbReference type="NCBIfam" id="TIGR00515">
    <property type="entry name" value="accD"/>
    <property type="match status" value="1"/>
</dbReference>
<dbReference type="PANTHER" id="PTHR42995">
    <property type="entry name" value="ACETYL-COENZYME A CARBOXYLASE CARBOXYL TRANSFERASE SUBUNIT BETA, CHLOROPLASTIC"/>
    <property type="match status" value="1"/>
</dbReference>
<dbReference type="PANTHER" id="PTHR42995:SF5">
    <property type="entry name" value="ACETYL-COENZYME A CARBOXYLASE CARBOXYL TRANSFERASE SUBUNIT BETA, CHLOROPLASTIC"/>
    <property type="match status" value="1"/>
</dbReference>
<dbReference type="Pfam" id="PF01039">
    <property type="entry name" value="Carboxyl_trans"/>
    <property type="match status" value="1"/>
</dbReference>
<dbReference type="Pfam" id="PF17848">
    <property type="entry name" value="Zn_ribbon_ACC"/>
    <property type="match status" value="1"/>
</dbReference>
<dbReference type="PRINTS" id="PR01070">
    <property type="entry name" value="ACCCTRFRASEB"/>
</dbReference>
<dbReference type="SUPFAM" id="SSF52096">
    <property type="entry name" value="ClpP/crotonase"/>
    <property type="match status" value="1"/>
</dbReference>
<dbReference type="PROSITE" id="PS50980">
    <property type="entry name" value="COA_CT_NTER"/>
    <property type="match status" value="1"/>
</dbReference>
<proteinExistence type="inferred from homology"/>
<organism>
    <name type="scientific">Brevibacillus brevis (strain 47 / JCM 6285 / NBRC 100599)</name>
    <dbReference type="NCBI Taxonomy" id="358681"/>
    <lineage>
        <taxon>Bacteria</taxon>
        <taxon>Bacillati</taxon>
        <taxon>Bacillota</taxon>
        <taxon>Bacilli</taxon>
        <taxon>Bacillales</taxon>
        <taxon>Paenibacillaceae</taxon>
        <taxon>Brevibacillus</taxon>
    </lineage>
</organism>
<comment type="function">
    <text evidence="1">Component of the acetyl coenzyme A carboxylase (ACC) complex. Biotin carboxylase (BC) catalyzes the carboxylation of biotin on its carrier protein (BCCP) and then the CO(2) group is transferred by the transcarboxylase to acetyl-CoA to form malonyl-CoA.</text>
</comment>
<comment type="catalytic activity">
    <reaction evidence="1">
        <text>N(6)-carboxybiotinyl-L-lysyl-[protein] + acetyl-CoA = N(6)-biotinyl-L-lysyl-[protein] + malonyl-CoA</text>
        <dbReference type="Rhea" id="RHEA:54728"/>
        <dbReference type="Rhea" id="RHEA-COMP:10505"/>
        <dbReference type="Rhea" id="RHEA-COMP:10506"/>
        <dbReference type="ChEBI" id="CHEBI:57288"/>
        <dbReference type="ChEBI" id="CHEBI:57384"/>
        <dbReference type="ChEBI" id="CHEBI:83144"/>
        <dbReference type="ChEBI" id="CHEBI:83145"/>
        <dbReference type="EC" id="2.1.3.15"/>
    </reaction>
</comment>
<comment type="cofactor">
    <cofactor evidence="1">
        <name>Zn(2+)</name>
        <dbReference type="ChEBI" id="CHEBI:29105"/>
    </cofactor>
    <text evidence="1">Binds 1 zinc ion per subunit.</text>
</comment>
<comment type="pathway">
    <text evidence="1">Lipid metabolism; malonyl-CoA biosynthesis; malonyl-CoA from acetyl-CoA: step 1/1.</text>
</comment>
<comment type="subunit">
    <text evidence="1">Acetyl-CoA carboxylase is a heterohexamer composed of biotin carboxyl carrier protein (AccB), biotin carboxylase (AccC) and two subunits each of ACCase subunit alpha (AccA) and ACCase subunit beta (AccD).</text>
</comment>
<comment type="subcellular location">
    <subcellularLocation>
        <location evidence="1">Cytoplasm</location>
    </subcellularLocation>
</comment>
<comment type="similarity">
    <text evidence="1">Belongs to the AccD/PCCB family.</text>
</comment>
<reference key="1">
    <citation type="submission" date="2005-03" db="EMBL/GenBank/DDBJ databases">
        <title>Brevibacillus brevis strain 47, complete genome.</title>
        <authorList>
            <person name="Hosoyama A."/>
            <person name="Yamada R."/>
            <person name="Hongo Y."/>
            <person name="Terui Y."/>
            <person name="Ankai A."/>
            <person name="Masuyama W."/>
            <person name="Sekiguchi M."/>
            <person name="Takeda T."/>
            <person name="Asano K."/>
            <person name="Ohji S."/>
            <person name="Ichikawa N."/>
            <person name="Narita S."/>
            <person name="Aoki N."/>
            <person name="Miura H."/>
            <person name="Matsushita S."/>
            <person name="Sekigawa T."/>
            <person name="Yamagata H."/>
            <person name="Yoshikawa H."/>
            <person name="Udaka S."/>
            <person name="Tanikawa S."/>
            <person name="Fujita N."/>
        </authorList>
    </citation>
    <scope>NUCLEOTIDE SEQUENCE [LARGE SCALE GENOMIC DNA]</scope>
    <source>
        <strain>47 / JCM 6285 / NBRC 100599</strain>
    </source>
</reference>
<feature type="chain" id="PRO_0000389699" description="Acetyl-coenzyme A carboxylase carboxyl transferase subunit beta">
    <location>
        <begin position="1"/>
        <end position="314"/>
    </location>
</feature>
<feature type="domain" description="CoA carboxyltransferase N-terminal" evidence="2">
    <location>
        <begin position="44"/>
        <end position="311"/>
    </location>
</feature>
<feature type="zinc finger region" description="C4-type" evidence="1">
    <location>
        <begin position="48"/>
        <end position="70"/>
    </location>
</feature>
<feature type="binding site" evidence="1">
    <location>
        <position position="48"/>
    </location>
    <ligand>
        <name>Zn(2+)</name>
        <dbReference type="ChEBI" id="CHEBI:29105"/>
    </ligand>
</feature>
<feature type="binding site" evidence="1">
    <location>
        <position position="51"/>
    </location>
    <ligand>
        <name>Zn(2+)</name>
        <dbReference type="ChEBI" id="CHEBI:29105"/>
    </ligand>
</feature>
<feature type="binding site" evidence="1">
    <location>
        <position position="67"/>
    </location>
    <ligand>
        <name>Zn(2+)</name>
        <dbReference type="ChEBI" id="CHEBI:29105"/>
    </ligand>
</feature>
<feature type="binding site" evidence="1">
    <location>
        <position position="70"/>
    </location>
    <ligand>
        <name>Zn(2+)</name>
        <dbReference type="ChEBI" id="CHEBI:29105"/>
    </ligand>
</feature>
<keyword id="KW-0067">ATP-binding</keyword>
<keyword id="KW-0963">Cytoplasm</keyword>
<keyword id="KW-0275">Fatty acid biosynthesis</keyword>
<keyword id="KW-0276">Fatty acid metabolism</keyword>
<keyword id="KW-0444">Lipid biosynthesis</keyword>
<keyword id="KW-0443">Lipid metabolism</keyword>
<keyword id="KW-0479">Metal-binding</keyword>
<keyword id="KW-0547">Nucleotide-binding</keyword>
<keyword id="KW-1185">Reference proteome</keyword>
<keyword id="KW-0808">Transferase</keyword>
<keyword id="KW-0862">Zinc</keyword>
<keyword id="KW-0863">Zinc-finger</keyword>
<accession>C0Z7W5</accession>
<evidence type="ECO:0000255" key="1">
    <source>
        <dbReference type="HAMAP-Rule" id="MF_01395"/>
    </source>
</evidence>
<evidence type="ECO:0000255" key="2">
    <source>
        <dbReference type="PROSITE-ProRule" id="PRU01136"/>
    </source>
</evidence>
<sequence length="314" mass="34768">MLKDLFGKKRKFATVPSETLARVPASTDISKEAGTKEKEVPEGLMNKCPHCGTIHYSKDLEKNLRVCKGCQFHYSMSAPERLQALLDDGVLREEFDANLITANPLGFPGYLEKLEQDMANTNLNEAIITGEGFLGGNRIVIGVMDSRFRMASMGSVVGEKITRAIEQAIERRLPFILFSASGGARMQEGVLSLMQMAKTSAALSRLDRERLLFVSVMTNPTYGGVSASFSSLGDYNIAEPGAMIGFAGRRVIEQTIRQELPKDFQTAEFLLKNGQLDMVVHRKDMRNTLSKLVEMHTSREGVETWQASSPLKSH</sequence>
<protein>
    <recommendedName>
        <fullName evidence="1">Acetyl-coenzyme A carboxylase carboxyl transferase subunit beta</fullName>
        <shortName evidence="1">ACCase subunit beta</shortName>
        <shortName evidence="1">Acetyl-CoA carboxylase carboxyltransferase subunit beta</shortName>
        <ecNumber evidence="1">2.1.3.15</ecNumber>
    </recommendedName>
</protein>
<gene>
    <name evidence="1" type="primary">accD</name>
    <name type="ordered locus">BBR47_13810</name>
</gene>